<proteinExistence type="inferred from homology"/>
<sequence length="250" mass="27025">MRKPLMAGNWKMNKTVSEAVSFVKALKGAVTGVSNVEILVCPAFTVLYEVNNEIKGSNINLGAQNLFGEAKGAFTGEISTAMIRDTGCSYVIVGHSERRQYFGETDEAVNKKTKAALAADITPIVCVGETLKERENNVTFSVIEKQVRNGLADLTLQQASLTVIAYEPVWAIGTGKTATPDQAQEVHSFIRKIYAQMYEESAEKVRILYGGSVNPGNVSDLMKKSDIDGGLVGGASLEAESFTKLVKYSK</sequence>
<protein>
    <recommendedName>
        <fullName evidence="1">Triosephosphate isomerase</fullName>
        <shortName evidence="1">TIM</shortName>
        <shortName evidence="1">TPI</shortName>
        <ecNumber evidence="1">5.3.1.1</ecNumber>
    </recommendedName>
    <alternativeName>
        <fullName evidence="1">Triose-phosphate isomerase</fullName>
    </alternativeName>
</protein>
<evidence type="ECO:0000255" key="1">
    <source>
        <dbReference type="HAMAP-Rule" id="MF_00147"/>
    </source>
</evidence>
<accession>B1GZW3</accession>
<keyword id="KW-0963">Cytoplasm</keyword>
<keyword id="KW-0312">Gluconeogenesis</keyword>
<keyword id="KW-0324">Glycolysis</keyword>
<keyword id="KW-0413">Isomerase</keyword>
<comment type="function">
    <text evidence="1">Involved in the gluconeogenesis. Catalyzes stereospecifically the conversion of dihydroxyacetone phosphate (DHAP) to D-glyceraldehyde-3-phosphate (G3P).</text>
</comment>
<comment type="catalytic activity">
    <reaction evidence="1">
        <text>D-glyceraldehyde 3-phosphate = dihydroxyacetone phosphate</text>
        <dbReference type="Rhea" id="RHEA:18585"/>
        <dbReference type="ChEBI" id="CHEBI:57642"/>
        <dbReference type="ChEBI" id="CHEBI:59776"/>
        <dbReference type="EC" id="5.3.1.1"/>
    </reaction>
</comment>
<comment type="pathway">
    <text evidence="1">Carbohydrate biosynthesis; gluconeogenesis.</text>
</comment>
<comment type="pathway">
    <text evidence="1">Carbohydrate degradation; glycolysis; D-glyceraldehyde 3-phosphate from glycerone phosphate: step 1/1.</text>
</comment>
<comment type="subunit">
    <text evidence="1">Homodimer.</text>
</comment>
<comment type="subcellular location">
    <subcellularLocation>
        <location evidence="1">Cytoplasm</location>
    </subcellularLocation>
</comment>
<comment type="similarity">
    <text evidence="1">Belongs to the triosephosphate isomerase family.</text>
</comment>
<organism>
    <name type="scientific">Endomicrobium trichonymphae</name>
    <dbReference type="NCBI Taxonomy" id="1408204"/>
    <lineage>
        <taxon>Bacteria</taxon>
        <taxon>Pseudomonadati</taxon>
        <taxon>Elusimicrobiota</taxon>
        <taxon>Endomicrobiia</taxon>
        <taxon>Endomicrobiales</taxon>
        <taxon>Endomicrobiaceae</taxon>
        <taxon>Candidatus Endomicrobiellum</taxon>
    </lineage>
</organism>
<reference key="1">
    <citation type="journal article" date="2008" name="Proc. Natl. Acad. Sci. U.S.A.">
        <title>Complete genome of the uncultured termite group 1 bacteria in a single host protist cell.</title>
        <authorList>
            <person name="Hongoh Y."/>
            <person name="Sharma V.K."/>
            <person name="Prakash T."/>
            <person name="Noda S."/>
            <person name="Taylor T.D."/>
            <person name="Kudo T."/>
            <person name="Sakaki Y."/>
            <person name="Toyoda A."/>
            <person name="Hattori M."/>
            <person name="Ohkuma M."/>
        </authorList>
    </citation>
    <scope>NUCLEOTIDE SEQUENCE [LARGE SCALE GENOMIC DNA]</scope>
</reference>
<gene>
    <name evidence="1" type="primary">tpiA</name>
    <name type="ordered locus">TGRD_312</name>
</gene>
<feature type="chain" id="PRO_1000096546" description="Triosephosphate isomerase">
    <location>
        <begin position="1"/>
        <end position="250"/>
    </location>
</feature>
<feature type="active site" description="Electrophile" evidence="1">
    <location>
        <position position="95"/>
    </location>
</feature>
<feature type="active site" description="Proton acceptor" evidence="1">
    <location>
        <position position="167"/>
    </location>
</feature>
<feature type="binding site" evidence="1">
    <location>
        <begin position="9"/>
        <end position="11"/>
    </location>
    <ligand>
        <name>substrate</name>
    </ligand>
</feature>
<feature type="binding site" evidence="1">
    <location>
        <position position="173"/>
    </location>
    <ligand>
        <name>substrate</name>
    </ligand>
</feature>
<feature type="binding site" evidence="1">
    <location>
        <position position="212"/>
    </location>
    <ligand>
        <name>substrate</name>
    </ligand>
</feature>
<feature type="binding site" evidence="1">
    <location>
        <begin position="233"/>
        <end position="234"/>
    </location>
    <ligand>
        <name>substrate</name>
    </ligand>
</feature>
<name>TPIS_ENDTX</name>
<dbReference type="EC" id="5.3.1.1" evidence="1"/>
<dbReference type="EMBL" id="AP009510">
    <property type="protein sequence ID" value="BAG13795.1"/>
    <property type="molecule type" value="Genomic_DNA"/>
</dbReference>
<dbReference type="RefSeq" id="WP_015423322.1">
    <property type="nucleotide sequence ID" value="NC_020419.1"/>
</dbReference>
<dbReference type="SMR" id="B1GZW3"/>
<dbReference type="STRING" id="471821.TGRD_312"/>
<dbReference type="KEGG" id="rsd:TGRD_312"/>
<dbReference type="PATRIC" id="fig|471821.5.peg.496"/>
<dbReference type="HOGENOM" id="CLU_024251_2_3_0"/>
<dbReference type="UniPathway" id="UPA00109">
    <property type="reaction ID" value="UER00189"/>
</dbReference>
<dbReference type="UniPathway" id="UPA00138"/>
<dbReference type="Proteomes" id="UP000001691">
    <property type="component" value="Chromosome"/>
</dbReference>
<dbReference type="GO" id="GO:0005829">
    <property type="term" value="C:cytosol"/>
    <property type="evidence" value="ECO:0007669"/>
    <property type="project" value="TreeGrafter"/>
</dbReference>
<dbReference type="GO" id="GO:0004807">
    <property type="term" value="F:triose-phosphate isomerase activity"/>
    <property type="evidence" value="ECO:0007669"/>
    <property type="project" value="UniProtKB-UniRule"/>
</dbReference>
<dbReference type="GO" id="GO:0006094">
    <property type="term" value="P:gluconeogenesis"/>
    <property type="evidence" value="ECO:0007669"/>
    <property type="project" value="UniProtKB-UniRule"/>
</dbReference>
<dbReference type="GO" id="GO:0046166">
    <property type="term" value="P:glyceraldehyde-3-phosphate biosynthetic process"/>
    <property type="evidence" value="ECO:0007669"/>
    <property type="project" value="TreeGrafter"/>
</dbReference>
<dbReference type="GO" id="GO:0019563">
    <property type="term" value="P:glycerol catabolic process"/>
    <property type="evidence" value="ECO:0007669"/>
    <property type="project" value="TreeGrafter"/>
</dbReference>
<dbReference type="GO" id="GO:0006096">
    <property type="term" value="P:glycolytic process"/>
    <property type="evidence" value="ECO:0007669"/>
    <property type="project" value="UniProtKB-UniRule"/>
</dbReference>
<dbReference type="CDD" id="cd00311">
    <property type="entry name" value="TIM"/>
    <property type="match status" value="1"/>
</dbReference>
<dbReference type="FunFam" id="3.20.20.70:FF:000016">
    <property type="entry name" value="Triosephosphate isomerase"/>
    <property type="match status" value="1"/>
</dbReference>
<dbReference type="Gene3D" id="3.20.20.70">
    <property type="entry name" value="Aldolase class I"/>
    <property type="match status" value="1"/>
</dbReference>
<dbReference type="HAMAP" id="MF_00147_B">
    <property type="entry name" value="TIM_B"/>
    <property type="match status" value="1"/>
</dbReference>
<dbReference type="InterPro" id="IPR013785">
    <property type="entry name" value="Aldolase_TIM"/>
</dbReference>
<dbReference type="InterPro" id="IPR035990">
    <property type="entry name" value="TIM_sf"/>
</dbReference>
<dbReference type="InterPro" id="IPR022896">
    <property type="entry name" value="TrioseP_Isoase_bac/euk"/>
</dbReference>
<dbReference type="InterPro" id="IPR000652">
    <property type="entry name" value="Triosephosphate_isomerase"/>
</dbReference>
<dbReference type="InterPro" id="IPR020861">
    <property type="entry name" value="Triosephosphate_isomerase_AS"/>
</dbReference>
<dbReference type="NCBIfam" id="TIGR00419">
    <property type="entry name" value="tim"/>
    <property type="match status" value="1"/>
</dbReference>
<dbReference type="PANTHER" id="PTHR21139">
    <property type="entry name" value="TRIOSEPHOSPHATE ISOMERASE"/>
    <property type="match status" value="1"/>
</dbReference>
<dbReference type="PANTHER" id="PTHR21139:SF42">
    <property type="entry name" value="TRIOSEPHOSPHATE ISOMERASE"/>
    <property type="match status" value="1"/>
</dbReference>
<dbReference type="Pfam" id="PF00121">
    <property type="entry name" value="TIM"/>
    <property type="match status" value="1"/>
</dbReference>
<dbReference type="SUPFAM" id="SSF51351">
    <property type="entry name" value="Triosephosphate isomerase (TIM)"/>
    <property type="match status" value="1"/>
</dbReference>
<dbReference type="PROSITE" id="PS00171">
    <property type="entry name" value="TIM_1"/>
    <property type="match status" value="1"/>
</dbReference>
<dbReference type="PROSITE" id="PS51440">
    <property type="entry name" value="TIM_2"/>
    <property type="match status" value="1"/>
</dbReference>